<protein>
    <recommendedName>
        <fullName evidence="1">Large ribosomal subunit protein bL20c</fullName>
    </recommendedName>
    <alternativeName>
        <fullName evidence="2">50S ribosomal protein L20, chloroplastic</fullName>
    </alternativeName>
</protein>
<name>RK20_DRIGR</name>
<comment type="function">
    <text evidence="1">Binds directly to 23S ribosomal RNA and is necessary for the in vitro assembly process of the 50S ribosomal subunit. It is not involved in the protein synthesizing functions of that subunit.</text>
</comment>
<comment type="subcellular location">
    <subcellularLocation>
        <location>Plastid</location>
        <location>Chloroplast</location>
    </subcellularLocation>
</comment>
<comment type="similarity">
    <text evidence="1">Belongs to the bacterial ribosomal protein bL20 family.</text>
</comment>
<reference key="1">
    <citation type="journal article" date="2006" name="BMC Evol. Biol.">
        <title>Complete plastid genome sequences of Drimys, Liriodendron, and Piper: implications for the phylogenetic relationships of magnoliids.</title>
        <authorList>
            <person name="Cai Z."/>
            <person name="Penaflor C."/>
            <person name="Kuehl J.V."/>
            <person name="Leebens-Mack J."/>
            <person name="Carlson J.E."/>
            <person name="dePamphilis C.W."/>
            <person name="Boore J.L."/>
            <person name="Jansen R.K."/>
        </authorList>
    </citation>
    <scope>NUCLEOTIDE SEQUENCE [LARGE SCALE GENOMIC DNA]</scope>
</reference>
<geneLocation type="chloroplast"/>
<dbReference type="EMBL" id="DQ887676">
    <property type="protein sequence ID" value="ABH88320.1"/>
    <property type="molecule type" value="Genomic_DNA"/>
</dbReference>
<dbReference type="RefSeq" id="YP_784409.1">
    <property type="nucleotide sequence ID" value="NC_008456.1"/>
</dbReference>
<dbReference type="SMR" id="Q06GX4"/>
<dbReference type="GeneID" id="4363595"/>
<dbReference type="GO" id="GO:0009507">
    <property type="term" value="C:chloroplast"/>
    <property type="evidence" value="ECO:0007669"/>
    <property type="project" value="UniProtKB-SubCell"/>
</dbReference>
<dbReference type="GO" id="GO:1990904">
    <property type="term" value="C:ribonucleoprotein complex"/>
    <property type="evidence" value="ECO:0007669"/>
    <property type="project" value="UniProtKB-KW"/>
</dbReference>
<dbReference type="GO" id="GO:0005840">
    <property type="term" value="C:ribosome"/>
    <property type="evidence" value="ECO:0007669"/>
    <property type="project" value="UniProtKB-KW"/>
</dbReference>
<dbReference type="GO" id="GO:0019843">
    <property type="term" value="F:rRNA binding"/>
    <property type="evidence" value="ECO:0007669"/>
    <property type="project" value="UniProtKB-UniRule"/>
</dbReference>
<dbReference type="GO" id="GO:0003735">
    <property type="term" value="F:structural constituent of ribosome"/>
    <property type="evidence" value="ECO:0007669"/>
    <property type="project" value="InterPro"/>
</dbReference>
<dbReference type="GO" id="GO:0000027">
    <property type="term" value="P:ribosomal large subunit assembly"/>
    <property type="evidence" value="ECO:0007669"/>
    <property type="project" value="UniProtKB-UniRule"/>
</dbReference>
<dbReference type="GO" id="GO:0006412">
    <property type="term" value="P:translation"/>
    <property type="evidence" value="ECO:0007669"/>
    <property type="project" value="InterPro"/>
</dbReference>
<dbReference type="CDD" id="cd07026">
    <property type="entry name" value="Ribosomal_L20"/>
    <property type="match status" value="1"/>
</dbReference>
<dbReference type="FunFam" id="1.10.1900.20:FF:000001">
    <property type="entry name" value="50S ribosomal protein L20"/>
    <property type="match status" value="1"/>
</dbReference>
<dbReference type="Gene3D" id="6.10.160.10">
    <property type="match status" value="1"/>
</dbReference>
<dbReference type="Gene3D" id="1.10.1900.20">
    <property type="entry name" value="Ribosomal protein L20"/>
    <property type="match status" value="1"/>
</dbReference>
<dbReference type="HAMAP" id="MF_00382">
    <property type="entry name" value="Ribosomal_bL20"/>
    <property type="match status" value="1"/>
</dbReference>
<dbReference type="InterPro" id="IPR005813">
    <property type="entry name" value="Ribosomal_bL20"/>
</dbReference>
<dbReference type="InterPro" id="IPR049946">
    <property type="entry name" value="RIBOSOMAL_L20_CS"/>
</dbReference>
<dbReference type="InterPro" id="IPR035566">
    <property type="entry name" value="Ribosomal_protein_bL20_C"/>
</dbReference>
<dbReference type="NCBIfam" id="TIGR01032">
    <property type="entry name" value="rplT_bact"/>
    <property type="match status" value="1"/>
</dbReference>
<dbReference type="PANTHER" id="PTHR10986">
    <property type="entry name" value="39S RIBOSOMAL PROTEIN L20"/>
    <property type="match status" value="1"/>
</dbReference>
<dbReference type="Pfam" id="PF00453">
    <property type="entry name" value="Ribosomal_L20"/>
    <property type="match status" value="1"/>
</dbReference>
<dbReference type="PRINTS" id="PR00062">
    <property type="entry name" value="RIBOSOMALL20"/>
</dbReference>
<dbReference type="SUPFAM" id="SSF74731">
    <property type="entry name" value="Ribosomal protein L20"/>
    <property type="match status" value="1"/>
</dbReference>
<dbReference type="PROSITE" id="PS00937">
    <property type="entry name" value="RIBOSOMAL_L20"/>
    <property type="match status" value="1"/>
</dbReference>
<feature type="chain" id="PRO_0000276407" description="Large ribosomal subunit protein bL20c">
    <location>
        <begin position="1"/>
        <end position="117"/>
    </location>
</feature>
<proteinExistence type="inferred from homology"/>
<accession>Q06GX4</accession>
<evidence type="ECO:0000255" key="1">
    <source>
        <dbReference type="HAMAP-Rule" id="MF_00382"/>
    </source>
</evidence>
<evidence type="ECO:0000305" key="2"/>
<sequence length="117" mass="14315">MTRVRRGYIARRRRTKIRLFTSTFRGAHSRLTRTTTQQKMRALVSSHRDRCRQKRDFRRLWITRINAVTRENRVSYSYSRLMHDLYKRQLLLNRKILAQIAISNRNCIYMISNEIIK</sequence>
<organism>
    <name type="scientific">Drimys granadensis</name>
    <dbReference type="NCBI Taxonomy" id="224735"/>
    <lineage>
        <taxon>Eukaryota</taxon>
        <taxon>Viridiplantae</taxon>
        <taxon>Streptophyta</taxon>
        <taxon>Embryophyta</taxon>
        <taxon>Tracheophyta</taxon>
        <taxon>Spermatophyta</taxon>
        <taxon>Magnoliopsida</taxon>
        <taxon>Magnoliidae</taxon>
        <taxon>Canellales</taxon>
        <taxon>Winteraceae</taxon>
        <taxon>Drimys</taxon>
    </lineage>
</organism>
<gene>
    <name evidence="1" type="primary">rpl20</name>
</gene>
<keyword id="KW-0150">Chloroplast</keyword>
<keyword id="KW-0934">Plastid</keyword>
<keyword id="KW-0687">Ribonucleoprotein</keyword>
<keyword id="KW-0689">Ribosomal protein</keyword>
<keyword id="KW-0694">RNA-binding</keyword>
<keyword id="KW-0699">rRNA-binding</keyword>